<organism>
    <name type="scientific">Monkeypox virus</name>
    <dbReference type="NCBI Taxonomy" id="10244"/>
    <lineage>
        <taxon>Viruses</taxon>
        <taxon>Varidnaviria</taxon>
        <taxon>Bamfordvirae</taxon>
        <taxon>Nucleocytoviricota</taxon>
        <taxon>Pokkesviricetes</taxon>
        <taxon>Chitovirales</taxon>
        <taxon>Poxviridae</taxon>
        <taxon>Chordopoxvirinae</taxon>
        <taxon>Orthopoxvirus</taxon>
    </lineage>
</organism>
<evidence type="ECO:0000250" key="1">
    <source>
        <dbReference type="UniProtKB" id="P21606"/>
    </source>
</evidence>
<evidence type="ECO:0000305" key="2"/>
<protein>
    <recommendedName>
        <fullName>Protein OPG067</fullName>
    </recommendedName>
</protein>
<gene>
    <name type="primary">OPG067</name>
</gene>
<organismHost>
    <name type="scientific">Cynomys gunnisoni</name>
    <name type="common">Gunnison's prairie dog</name>
    <name type="synonym">Spermophilus gunnisoni</name>
    <dbReference type="NCBI Taxonomy" id="45479"/>
</organismHost>
<organismHost>
    <name type="scientific">Cynomys leucurus</name>
    <name type="common">White-tailed prairie dog</name>
    <dbReference type="NCBI Taxonomy" id="99825"/>
</organismHost>
<organismHost>
    <name type="scientific">Cynomys ludovicianus</name>
    <name type="common">Black-tailed prairie dog</name>
    <dbReference type="NCBI Taxonomy" id="45480"/>
</organismHost>
<organismHost>
    <name type="scientific">Cynomys mexicanus</name>
    <name type="common">Mexican prairie dog</name>
    <dbReference type="NCBI Taxonomy" id="99826"/>
</organismHost>
<organismHost>
    <name type="scientific">Cynomys parvidens</name>
    <name type="common">Utah prairie dog</name>
    <dbReference type="NCBI Taxonomy" id="99827"/>
</organismHost>
<organismHost>
    <name type="scientific">Gliridae</name>
    <name type="common">dormice</name>
    <dbReference type="NCBI Taxonomy" id="30650"/>
</organismHost>
<organismHost>
    <name type="scientific">Heliosciurus ruwenzorii</name>
    <name type="common">Ruwenzori sun squirrel</name>
    <dbReference type="NCBI Taxonomy" id="226685"/>
</organismHost>
<organismHost>
    <name type="scientific">Homo sapiens</name>
    <name type="common">Human</name>
    <dbReference type="NCBI Taxonomy" id="9606"/>
</organismHost>
<organismHost>
    <name type="scientific">Mus musculus</name>
    <name type="common">Mouse</name>
    <dbReference type="NCBI Taxonomy" id="10090"/>
</organismHost>
<sequence length="133" mass="15385">MINDDSFTLKRKYQIDSAESTMKMDKTMTKFQNRVKMVKEINQTIRAAQTHYETLKLGYIKFKGMIRTTTLEDIAPSIPNNQKTYKLFSDISVIGKASQNPSKMIYARCFTCFPICLEMTIDSFVIECIQHCS</sequence>
<feature type="chain" id="PRO_0000457700" description="Protein OPG067">
    <location>
        <begin position="1"/>
        <end position="133"/>
    </location>
</feature>
<keyword id="KW-0244">Early protein</keyword>
<keyword id="KW-1035">Host cytoplasm</keyword>
<keyword id="KW-1185">Reference proteome</keyword>
<keyword id="KW-0677">Repeat</keyword>
<dbReference type="EMBL" id="MT903340">
    <property type="protein sequence ID" value="QNP12923.1"/>
    <property type="molecule type" value="Genomic_DNA"/>
</dbReference>
<dbReference type="Proteomes" id="UP000516359">
    <property type="component" value="Genome"/>
</dbReference>
<dbReference type="GO" id="GO:0030430">
    <property type="term" value="C:host cell cytoplasm"/>
    <property type="evidence" value="ECO:0007669"/>
    <property type="project" value="UniProtKB-SubCell"/>
</dbReference>
<comment type="function">
    <text evidence="1">Major early protein present in virus factories. The presence of BEN domains suggests a possible role in organization of viral DNA during replication or transcription.</text>
</comment>
<comment type="subcellular location">
    <subcellularLocation>
        <location evidence="1">Host cytoplasm</location>
    </subcellularLocation>
    <text evidence="1">Localizes in cytoplasmic virus factories.</text>
</comment>
<comment type="similarity">
    <text evidence="2">Belongs to the orthopoxvirus OPG067 family.</text>
</comment>
<accession>A0A7H0DN40</accession>
<reference key="1">
    <citation type="journal article" date="2022" name="J. Infect. Dis.">
        <title>Exportation of Monkeypox virus from the African continent.</title>
        <authorList>
            <person name="Mauldin M.R."/>
            <person name="McCollum A.M."/>
            <person name="Nakazawa Y.J."/>
            <person name="Mandra A."/>
            <person name="Whitehouse E.R."/>
            <person name="Davidson W."/>
            <person name="Zhao H."/>
            <person name="Gao J."/>
            <person name="Li Y."/>
            <person name="Doty J."/>
            <person name="Yinka-Ogunleye A."/>
            <person name="Akinpelu A."/>
            <person name="Aruna O."/>
            <person name="Naidoo D."/>
            <person name="Lewandowski K."/>
            <person name="Afrough B."/>
            <person name="Graham V."/>
            <person name="Aarons E."/>
            <person name="Hewson R."/>
            <person name="Vipond R."/>
            <person name="Dunning J."/>
            <person name="Chand M."/>
            <person name="Brown C."/>
            <person name="Cohen-Gihon I."/>
            <person name="Erez N."/>
            <person name="Shifman O."/>
            <person name="Israeli O."/>
            <person name="Sharon M."/>
            <person name="Schwartz E."/>
            <person name="Beth-Din A."/>
            <person name="Zvi A."/>
            <person name="Mak T.M."/>
            <person name="Ng Y.K."/>
            <person name="Cui L."/>
            <person name="Lin R.T.P."/>
            <person name="Olson V.A."/>
            <person name="Brooks T."/>
            <person name="Paran N."/>
            <person name="Ihekweazu C."/>
            <person name="Reynolds M.G."/>
        </authorList>
    </citation>
    <scope>NUCLEOTIDE SEQUENCE [LARGE SCALE GENOMIC DNA]</scope>
    <source>
        <strain>MPXV-M5312_HM12_Rivers</strain>
    </source>
</reference>
<name>PG067_MONPV</name>
<proteinExistence type="inferred from homology"/>